<reference key="1">
    <citation type="journal article" date="2001" name="Genome Res.">
        <title>Sequence and analysis of chromosome I of the amitochondriate intracellular parasite Encephalitozoon cuniculi (Microspora).</title>
        <authorList>
            <person name="Peyret P."/>
            <person name="Katinka M.D."/>
            <person name="Duprat S."/>
            <person name="Duffieux F."/>
            <person name="Barbe V."/>
            <person name="Barbazanges M."/>
            <person name="Weissenbach J."/>
            <person name="Saurin W."/>
            <person name="Vivares C.P."/>
        </authorList>
    </citation>
    <scope>NUCLEOTIDE SEQUENCE [LARGE SCALE GENOMIC DNA]</scope>
    <source>
        <strain>GB-M1</strain>
    </source>
</reference>
<reference key="2">
    <citation type="journal article" date="2001" name="Nature">
        <title>Genome sequence and gene compaction of the eukaryote parasite Encephalitozoon cuniculi.</title>
        <authorList>
            <person name="Katinka M.D."/>
            <person name="Duprat S."/>
            <person name="Cornillot E."/>
            <person name="Metenier G."/>
            <person name="Thomarat F."/>
            <person name="Prensier G."/>
            <person name="Barbe V."/>
            <person name="Peyretaillade E."/>
            <person name="Brottier P."/>
            <person name="Wincker P."/>
            <person name="Delbac F."/>
            <person name="El Alaoui H."/>
            <person name="Peyret P."/>
            <person name="Saurin W."/>
            <person name="Gouy M."/>
            <person name="Weissenbach J."/>
            <person name="Vivares C.P."/>
        </authorList>
    </citation>
    <scope>NUCLEOTIDE SEQUENCE [LARGE SCALE GENOMIC DNA]</scope>
    <source>
        <strain>GB-M1</strain>
    </source>
</reference>
<reference key="3">
    <citation type="journal article" date="2006" name="Proteomics">
        <title>Proteomic analysis of the eukaryotic parasite Encephalitozoon cuniculi (microsporidia): a reference map for proteins expressed in late sporogonial stages.</title>
        <authorList>
            <person name="Brosson D."/>
            <person name="Kuhn L."/>
            <person name="Delbac F."/>
            <person name="Garin J."/>
            <person name="Vivares C.P."/>
            <person name="Texier C."/>
        </authorList>
    </citation>
    <scope>IDENTIFICATION BY MASS SPECTROMETRY [LARGE SCALE ANALYSIS]</scope>
    <scope>DEVELOPMENTAL STAGE</scope>
    <scope>SUBCELLULAR LOCATION</scope>
</reference>
<feature type="chain" id="PRO_0000382766" description="Uncharacterized membrane protein ECU01_0910">
    <location>
        <begin position="1"/>
        <end position="161"/>
    </location>
</feature>
<feature type="transmembrane region" description="Helical" evidence="1">
    <location>
        <begin position="16"/>
        <end position="36"/>
    </location>
</feature>
<protein>
    <recommendedName>
        <fullName>Uncharacterized membrane protein ECU01_0910</fullName>
    </recommendedName>
</protein>
<comment type="subcellular location">
    <subcellularLocation>
        <location evidence="3">Membrane</location>
        <topology evidence="3">Single-pass membrane protein</topology>
    </subcellularLocation>
</comment>
<comment type="developmental stage">
    <text evidence="2">Expressed in late sporogonial stages.</text>
</comment>
<gene>
    <name type="ordered locus">ECU01_0910</name>
</gene>
<proteinExistence type="evidence at protein level"/>
<accession>Q8SWK6</accession>
<evidence type="ECO:0000255" key="1"/>
<evidence type="ECO:0000269" key="2">
    <source>
    </source>
</evidence>
<evidence type="ECO:0000305" key="3"/>
<sequence length="161" mass="18084">MDSPGRRSGSAMSLRKLGLVVAIFFFMMGTTVVVLYKYLNAKSSGGTEQKPEGAFGIPLRKESSRLRPNGGERMSILSMDAEHVRRLFDVLFEDINNAKEAYEDIMNLLEEYKVKRGISKKTKSFIDMLLSFLKSAPGTESEDIKILKSLANIVAKHYLKK</sequence>
<name>Y191_ENCCU</name>
<keyword id="KW-0472">Membrane</keyword>
<keyword id="KW-1185">Reference proteome</keyword>
<keyword id="KW-0812">Transmembrane</keyword>
<keyword id="KW-1133">Transmembrane helix</keyword>
<organism>
    <name type="scientific">Encephalitozoon cuniculi (strain GB-M1)</name>
    <name type="common">Microsporidian parasite</name>
    <dbReference type="NCBI Taxonomy" id="284813"/>
    <lineage>
        <taxon>Eukaryota</taxon>
        <taxon>Fungi</taxon>
        <taxon>Fungi incertae sedis</taxon>
        <taxon>Microsporidia</taxon>
        <taxon>Unikaryonidae</taxon>
        <taxon>Encephalitozoon</taxon>
    </lineage>
</organism>
<dbReference type="EMBL" id="AL391737">
    <property type="protein sequence ID" value="CAD24961.1"/>
    <property type="molecule type" value="Genomic_DNA"/>
</dbReference>
<dbReference type="RefSeq" id="NP_001402176.1">
    <property type="nucleotide sequence ID" value="NM_001415651.1"/>
</dbReference>
<dbReference type="RefSeq" id="XP_965926.1">
    <property type="nucleotide sequence ID" value="XM_960833.1"/>
</dbReference>
<dbReference type="SMR" id="Q8SWK6"/>
<dbReference type="GeneID" id="860267"/>
<dbReference type="VEuPathDB" id="MicrosporidiaDB:ECU01_0910"/>
<dbReference type="HOGENOM" id="CLU_1652135_0_0_1"/>
<dbReference type="InParanoid" id="Q8SWK6"/>
<dbReference type="OrthoDB" id="2192782at2759"/>
<dbReference type="Proteomes" id="UP000000819">
    <property type="component" value="Chromosome I"/>
</dbReference>
<dbReference type="GO" id="GO:0016020">
    <property type="term" value="C:membrane"/>
    <property type="evidence" value="ECO:0007669"/>
    <property type="project" value="UniProtKB-SubCell"/>
</dbReference>